<dbReference type="EMBL" id="AY653733">
    <property type="protein sequence ID" value="AAV50322.1"/>
    <property type="molecule type" value="Genomic_DNA"/>
</dbReference>
<dbReference type="KEGG" id="vg:9924634"/>
<dbReference type="OrthoDB" id="5066at10239"/>
<dbReference type="Proteomes" id="UP000001134">
    <property type="component" value="Genome"/>
</dbReference>
<gene>
    <name type="ordered locus">MIMI_R47</name>
</gene>
<reference key="1">
    <citation type="journal article" date="2004" name="Science">
        <title>The 1.2-megabase genome sequence of Mimivirus.</title>
        <authorList>
            <person name="Raoult D."/>
            <person name="Audic S."/>
            <person name="Robert C."/>
            <person name="Abergel C."/>
            <person name="Renesto P."/>
            <person name="Ogata H."/>
            <person name="La Scola B."/>
            <person name="Susan M."/>
            <person name="Claverie J.-M."/>
        </authorList>
    </citation>
    <scope>NUCLEOTIDE SEQUENCE [LARGE SCALE GENOMIC DNA]</scope>
    <source>
        <strain>Rowbotham-Bradford</strain>
    </source>
</reference>
<name>YR047_MIMIV</name>
<organism>
    <name type="scientific">Acanthamoeba polyphaga mimivirus</name>
    <name type="common">APMV</name>
    <dbReference type="NCBI Taxonomy" id="212035"/>
    <lineage>
        <taxon>Viruses</taxon>
        <taxon>Varidnaviria</taxon>
        <taxon>Bamfordvirae</taxon>
        <taxon>Nucleocytoviricota</taxon>
        <taxon>Megaviricetes</taxon>
        <taxon>Imitervirales</taxon>
        <taxon>Mimiviridae</taxon>
        <taxon>Megamimivirinae</taxon>
        <taxon>Mimivirus</taxon>
        <taxon>Mimivirus bradfordmassiliense</taxon>
    </lineage>
</organism>
<organismHost>
    <name type="scientific">Acanthamoeba polyphaga</name>
    <name type="common">Amoeba</name>
    <dbReference type="NCBI Taxonomy" id="5757"/>
</organismHost>
<protein>
    <recommendedName>
        <fullName>Uncharacterized protein R47</fullName>
    </recommendedName>
</protein>
<feature type="chain" id="PRO_0000247382" description="Uncharacterized protein R47">
    <location>
        <begin position="1"/>
        <end position="201"/>
    </location>
</feature>
<accession>Q5UPC5</accession>
<keyword id="KW-1185">Reference proteome</keyword>
<sequence>MDLLEFVDFLAKALNIHESKYDYQHVIYIDDETNVKILCNGCKNIFKTTPHTHLYLKNGECSKCFPCRKYKKLTTEKIISKLEKKYSDDFDYSEIDYRGVNYPVIISCKKCKNRFSVLPKEFLRNPKCRACGRKKNLSSREYVERAVLIHGSKYDYSKIEYRGLKCDIEIICNNCGILLKINARNHLRGRKCGCLLGNKTS</sequence>
<proteinExistence type="predicted"/>